<gene>
    <name evidence="1" type="primary">rlmE</name>
    <name evidence="1" type="synonym">ftsJ</name>
    <name evidence="1" type="synonym">rrmJ</name>
    <name type="ordered locus">Bcep18194_A4438</name>
</gene>
<accession>Q39HN2</accession>
<sequence>MAKNRFNQHWLHDHINDPYVKMAQREGYRARAAYKLKEIDEQDKLIRPGQVIVDLGATPGSWSQYARNKLAQGKKRDTEREGGIDGTIVALDILPMEPIADVHFLQGDFREDEVLHQLEEVLEGRDVDLVISDMAPNLSGVASADAARIEHLCDLALEFAQNHLKPDGALLVKCFHGSGYSQIVEKFKQQFKTVAPRKPKASRDKSSETFILGRHLKRPR</sequence>
<reference key="1">
    <citation type="submission" date="2005-10" db="EMBL/GenBank/DDBJ databases">
        <title>Complete sequence of chromosome 1 of Burkholderia sp. 383.</title>
        <authorList>
            <consortium name="US DOE Joint Genome Institute"/>
            <person name="Copeland A."/>
            <person name="Lucas S."/>
            <person name="Lapidus A."/>
            <person name="Barry K."/>
            <person name="Detter J.C."/>
            <person name="Glavina T."/>
            <person name="Hammon N."/>
            <person name="Israni S."/>
            <person name="Pitluck S."/>
            <person name="Chain P."/>
            <person name="Malfatti S."/>
            <person name="Shin M."/>
            <person name="Vergez L."/>
            <person name="Schmutz J."/>
            <person name="Larimer F."/>
            <person name="Land M."/>
            <person name="Kyrpides N."/>
            <person name="Lykidis A."/>
            <person name="Richardson P."/>
        </authorList>
    </citation>
    <scope>NUCLEOTIDE SEQUENCE [LARGE SCALE GENOMIC DNA]</scope>
    <source>
        <strain>ATCC 17760 / DSM 23089 / LMG 22485 / NCIMB 9086 / R18194 / 383</strain>
    </source>
</reference>
<organism>
    <name type="scientific">Burkholderia lata (strain ATCC 17760 / DSM 23089 / LMG 22485 / NCIMB 9086 / R18194 / 383)</name>
    <dbReference type="NCBI Taxonomy" id="482957"/>
    <lineage>
        <taxon>Bacteria</taxon>
        <taxon>Pseudomonadati</taxon>
        <taxon>Pseudomonadota</taxon>
        <taxon>Betaproteobacteria</taxon>
        <taxon>Burkholderiales</taxon>
        <taxon>Burkholderiaceae</taxon>
        <taxon>Burkholderia</taxon>
        <taxon>Burkholderia cepacia complex</taxon>
    </lineage>
</organism>
<name>RLME_BURL3</name>
<proteinExistence type="inferred from homology"/>
<comment type="function">
    <text evidence="1">Specifically methylates the uridine in position 2552 of 23S rRNA at the 2'-O position of the ribose in the fully assembled 50S ribosomal subunit.</text>
</comment>
<comment type="catalytic activity">
    <reaction evidence="1">
        <text>uridine(2552) in 23S rRNA + S-adenosyl-L-methionine = 2'-O-methyluridine(2552) in 23S rRNA + S-adenosyl-L-homocysteine + H(+)</text>
        <dbReference type="Rhea" id="RHEA:42720"/>
        <dbReference type="Rhea" id="RHEA-COMP:10202"/>
        <dbReference type="Rhea" id="RHEA-COMP:10203"/>
        <dbReference type="ChEBI" id="CHEBI:15378"/>
        <dbReference type="ChEBI" id="CHEBI:57856"/>
        <dbReference type="ChEBI" id="CHEBI:59789"/>
        <dbReference type="ChEBI" id="CHEBI:65315"/>
        <dbReference type="ChEBI" id="CHEBI:74478"/>
        <dbReference type="EC" id="2.1.1.166"/>
    </reaction>
</comment>
<comment type="subcellular location">
    <subcellularLocation>
        <location evidence="1">Cytoplasm</location>
    </subcellularLocation>
</comment>
<comment type="similarity">
    <text evidence="1">Belongs to the class I-like SAM-binding methyltransferase superfamily. RNA methyltransferase RlmE family.</text>
</comment>
<dbReference type="EC" id="2.1.1.166" evidence="1"/>
<dbReference type="EMBL" id="CP000151">
    <property type="protein sequence ID" value="ABB08034.1"/>
    <property type="molecule type" value="Genomic_DNA"/>
</dbReference>
<dbReference type="RefSeq" id="WP_011351604.1">
    <property type="nucleotide sequence ID" value="NC_007510.1"/>
</dbReference>
<dbReference type="SMR" id="Q39HN2"/>
<dbReference type="GeneID" id="45094336"/>
<dbReference type="KEGG" id="bur:Bcep18194_A4438"/>
<dbReference type="PATRIC" id="fig|482957.22.peg.1337"/>
<dbReference type="HOGENOM" id="CLU_009422_4_1_4"/>
<dbReference type="Proteomes" id="UP000002705">
    <property type="component" value="Chromosome 1"/>
</dbReference>
<dbReference type="GO" id="GO:0005737">
    <property type="term" value="C:cytoplasm"/>
    <property type="evidence" value="ECO:0007669"/>
    <property type="project" value="UniProtKB-SubCell"/>
</dbReference>
<dbReference type="GO" id="GO:0008650">
    <property type="term" value="F:rRNA (uridine-2'-O-)-methyltransferase activity"/>
    <property type="evidence" value="ECO:0007669"/>
    <property type="project" value="UniProtKB-UniRule"/>
</dbReference>
<dbReference type="FunFam" id="3.40.50.150:FF:000005">
    <property type="entry name" value="Ribosomal RNA large subunit methyltransferase E"/>
    <property type="match status" value="1"/>
</dbReference>
<dbReference type="Gene3D" id="3.40.50.150">
    <property type="entry name" value="Vaccinia Virus protein VP39"/>
    <property type="match status" value="1"/>
</dbReference>
<dbReference type="HAMAP" id="MF_01547">
    <property type="entry name" value="RNA_methyltr_E"/>
    <property type="match status" value="1"/>
</dbReference>
<dbReference type="InterPro" id="IPR050082">
    <property type="entry name" value="RNA_methyltr_RlmE"/>
</dbReference>
<dbReference type="InterPro" id="IPR002877">
    <property type="entry name" value="RNA_MeTrfase_FtsJ_dom"/>
</dbReference>
<dbReference type="InterPro" id="IPR015507">
    <property type="entry name" value="rRNA-MeTfrase_E"/>
</dbReference>
<dbReference type="InterPro" id="IPR029063">
    <property type="entry name" value="SAM-dependent_MTases_sf"/>
</dbReference>
<dbReference type="PANTHER" id="PTHR10920">
    <property type="entry name" value="RIBOSOMAL RNA METHYLTRANSFERASE"/>
    <property type="match status" value="1"/>
</dbReference>
<dbReference type="PANTHER" id="PTHR10920:SF18">
    <property type="entry name" value="RRNA METHYLTRANSFERASE 2, MITOCHONDRIAL"/>
    <property type="match status" value="1"/>
</dbReference>
<dbReference type="Pfam" id="PF01728">
    <property type="entry name" value="FtsJ"/>
    <property type="match status" value="1"/>
</dbReference>
<dbReference type="PIRSF" id="PIRSF005461">
    <property type="entry name" value="23S_rRNA_mtase"/>
    <property type="match status" value="1"/>
</dbReference>
<dbReference type="SUPFAM" id="SSF53335">
    <property type="entry name" value="S-adenosyl-L-methionine-dependent methyltransferases"/>
    <property type="match status" value="1"/>
</dbReference>
<protein>
    <recommendedName>
        <fullName evidence="1">Ribosomal RNA large subunit methyltransferase E</fullName>
        <ecNumber evidence="1">2.1.1.166</ecNumber>
    </recommendedName>
    <alternativeName>
        <fullName evidence="1">23S rRNA Um2552 methyltransferase</fullName>
    </alternativeName>
    <alternativeName>
        <fullName evidence="1">rRNA (uridine-2'-O-)-methyltransferase</fullName>
    </alternativeName>
</protein>
<keyword id="KW-0963">Cytoplasm</keyword>
<keyword id="KW-0489">Methyltransferase</keyword>
<keyword id="KW-0698">rRNA processing</keyword>
<keyword id="KW-0949">S-adenosyl-L-methionine</keyword>
<keyword id="KW-0808">Transferase</keyword>
<evidence type="ECO:0000255" key="1">
    <source>
        <dbReference type="HAMAP-Rule" id="MF_01547"/>
    </source>
</evidence>
<evidence type="ECO:0000256" key="2">
    <source>
        <dbReference type="SAM" id="MobiDB-lite"/>
    </source>
</evidence>
<feature type="chain" id="PRO_0000282736" description="Ribosomal RNA large subunit methyltransferase E">
    <location>
        <begin position="1"/>
        <end position="220"/>
    </location>
</feature>
<feature type="region of interest" description="Disordered" evidence="2">
    <location>
        <begin position="195"/>
        <end position="220"/>
    </location>
</feature>
<feature type="active site" description="Proton acceptor" evidence="1">
    <location>
        <position position="173"/>
    </location>
</feature>
<feature type="binding site" evidence="1">
    <location>
        <position position="60"/>
    </location>
    <ligand>
        <name>S-adenosyl-L-methionine</name>
        <dbReference type="ChEBI" id="CHEBI:59789"/>
    </ligand>
</feature>
<feature type="binding site" evidence="1">
    <location>
        <position position="62"/>
    </location>
    <ligand>
        <name>S-adenosyl-L-methionine</name>
        <dbReference type="ChEBI" id="CHEBI:59789"/>
    </ligand>
</feature>
<feature type="binding site" evidence="1">
    <location>
        <position position="92"/>
    </location>
    <ligand>
        <name>S-adenosyl-L-methionine</name>
        <dbReference type="ChEBI" id="CHEBI:59789"/>
    </ligand>
</feature>
<feature type="binding site" evidence="1">
    <location>
        <position position="108"/>
    </location>
    <ligand>
        <name>S-adenosyl-L-methionine</name>
        <dbReference type="ChEBI" id="CHEBI:59789"/>
    </ligand>
</feature>
<feature type="binding site" evidence="1">
    <location>
        <position position="133"/>
    </location>
    <ligand>
        <name>S-adenosyl-L-methionine</name>
        <dbReference type="ChEBI" id="CHEBI:59789"/>
    </ligand>
</feature>